<gene>
    <name evidence="1" type="primary">metG</name>
    <name type="ordered locus">PST_1262</name>
</gene>
<organism>
    <name type="scientific">Stutzerimonas stutzeri (strain A1501)</name>
    <name type="common">Pseudomonas stutzeri</name>
    <dbReference type="NCBI Taxonomy" id="379731"/>
    <lineage>
        <taxon>Bacteria</taxon>
        <taxon>Pseudomonadati</taxon>
        <taxon>Pseudomonadota</taxon>
        <taxon>Gammaproteobacteria</taxon>
        <taxon>Pseudomonadales</taxon>
        <taxon>Pseudomonadaceae</taxon>
        <taxon>Stutzerimonas</taxon>
    </lineage>
</organism>
<comment type="function">
    <text evidence="1">Is required not only for elongation of protein synthesis but also for the initiation of all mRNA translation through initiator tRNA(fMet) aminoacylation.</text>
</comment>
<comment type="catalytic activity">
    <reaction evidence="1">
        <text>tRNA(Met) + L-methionine + ATP = L-methionyl-tRNA(Met) + AMP + diphosphate</text>
        <dbReference type="Rhea" id="RHEA:13481"/>
        <dbReference type="Rhea" id="RHEA-COMP:9667"/>
        <dbReference type="Rhea" id="RHEA-COMP:9698"/>
        <dbReference type="ChEBI" id="CHEBI:30616"/>
        <dbReference type="ChEBI" id="CHEBI:33019"/>
        <dbReference type="ChEBI" id="CHEBI:57844"/>
        <dbReference type="ChEBI" id="CHEBI:78442"/>
        <dbReference type="ChEBI" id="CHEBI:78530"/>
        <dbReference type="ChEBI" id="CHEBI:456215"/>
        <dbReference type="EC" id="6.1.1.10"/>
    </reaction>
</comment>
<comment type="cofactor">
    <cofactor evidence="1">
        <name>Zn(2+)</name>
        <dbReference type="ChEBI" id="CHEBI:29105"/>
    </cofactor>
    <text evidence="1">Binds 1 zinc ion per subunit.</text>
</comment>
<comment type="subunit">
    <text evidence="1">Homodimer.</text>
</comment>
<comment type="subcellular location">
    <subcellularLocation>
        <location evidence="1">Cytoplasm</location>
    </subcellularLocation>
</comment>
<comment type="similarity">
    <text evidence="1">Belongs to the class-I aminoacyl-tRNA synthetase family. MetG type 1 subfamily.</text>
</comment>
<comment type="sequence caution" evidence="2">
    <conflict type="erroneous initiation">
        <sequence resource="EMBL-CDS" id="ABP78956"/>
    </conflict>
</comment>
<keyword id="KW-0030">Aminoacyl-tRNA synthetase</keyword>
<keyword id="KW-0067">ATP-binding</keyword>
<keyword id="KW-0963">Cytoplasm</keyword>
<keyword id="KW-0436">Ligase</keyword>
<keyword id="KW-0479">Metal-binding</keyword>
<keyword id="KW-0547">Nucleotide-binding</keyword>
<keyword id="KW-0648">Protein biosynthesis</keyword>
<keyword id="KW-1185">Reference proteome</keyword>
<keyword id="KW-0694">RNA-binding</keyword>
<keyword id="KW-0820">tRNA-binding</keyword>
<keyword id="KW-0862">Zinc</keyword>
<dbReference type="EC" id="6.1.1.10" evidence="1"/>
<dbReference type="EMBL" id="CP000304">
    <property type="protein sequence ID" value="ABP78956.1"/>
    <property type="status" value="ALT_INIT"/>
    <property type="molecule type" value="Genomic_DNA"/>
</dbReference>
<dbReference type="RefSeq" id="WP_041755408.1">
    <property type="nucleotide sequence ID" value="NC_009434.1"/>
</dbReference>
<dbReference type="SMR" id="A4VJ05"/>
<dbReference type="KEGG" id="psa:PST_1262"/>
<dbReference type="eggNOG" id="COG0073">
    <property type="taxonomic scope" value="Bacteria"/>
</dbReference>
<dbReference type="eggNOG" id="COG0143">
    <property type="taxonomic scope" value="Bacteria"/>
</dbReference>
<dbReference type="HOGENOM" id="CLU_009710_7_0_6"/>
<dbReference type="Proteomes" id="UP000000233">
    <property type="component" value="Chromosome"/>
</dbReference>
<dbReference type="GO" id="GO:0005829">
    <property type="term" value="C:cytosol"/>
    <property type="evidence" value="ECO:0007669"/>
    <property type="project" value="TreeGrafter"/>
</dbReference>
<dbReference type="GO" id="GO:0005524">
    <property type="term" value="F:ATP binding"/>
    <property type="evidence" value="ECO:0007669"/>
    <property type="project" value="UniProtKB-UniRule"/>
</dbReference>
<dbReference type="GO" id="GO:0046872">
    <property type="term" value="F:metal ion binding"/>
    <property type="evidence" value="ECO:0007669"/>
    <property type="project" value="UniProtKB-KW"/>
</dbReference>
<dbReference type="GO" id="GO:0004825">
    <property type="term" value="F:methionine-tRNA ligase activity"/>
    <property type="evidence" value="ECO:0007669"/>
    <property type="project" value="UniProtKB-UniRule"/>
</dbReference>
<dbReference type="GO" id="GO:0000049">
    <property type="term" value="F:tRNA binding"/>
    <property type="evidence" value="ECO:0007669"/>
    <property type="project" value="UniProtKB-KW"/>
</dbReference>
<dbReference type="GO" id="GO:0006431">
    <property type="term" value="P:methionyl-tRNA aminoacylation"/>
    <property type="evidence" value="ECO:0007669"/>
    <property type="project" value="UniProtKB-UniRule"/>
</dbReference>
<dbReference type="CDD" id="cd07957">
    <property type="entry name" value="Anticodon_Ia_Met"/>
    <property type="match status" value="1"/>
</dbReference>
<dbReference type="CDD" id="cd00814">
    <property type="entry name" value="MetRS_core"/>
    <property type="match status" value="1"/>
</dbReference>
<dbReference type="CDD" id="cd02800">
    <property type="entry name" value="tRNA_bind_EcMetRS_like"/>
    <property type="match status" value="1"/>
</dbReference>
<dbReference type="FunFam" id="1.10.730.10:FF:000005">
    <property type="entry name" value="Methionine--tRNA ligase"/>
    <property type="match status" value="1"/>
</dbReference>
<dbReference type="FunFam" id="2.20.28.20:FF:000001">
    <property type="entry name" value="Methionine--tRNA ligase"/>
    <property type="match status" value="1"/>
</dbReference>
<dbReference type="FunFam" id="2.40.50.140:FF:000042">
    <property type="entry name" value="Methionine--tRNA ligase"/>
    <property type="match status" value="1"/>
</dbReference>
<dbReference type="Gene3D" id="3.40.50.620">
    <property type="entry name" value="HUPs"/>
    <property type="match status" value="1"/>
</dbReference>
<dbReference type="Gene3D" id="1.10.730.10">
    <property type="entry name" value="Isoleucyl-tRNA Synthetase, Domain 1"/>
    <property type="match status" value="1"/>
</dbReference>
<dbReference type="Gene3D" id="2.20.28.20">
    <property type="entry name" value="Methionyl-tRNA synthetase, Zn-domain"/>
    <property type="match status" value="1"/>
</dbReference>
<dbReference type="Gene3D" id="2.40.50.140">
    <property type="entry name" value="Nucleic acid-binding proteins"/>
    <property type="match status" value="1"/>
</dbReference>
<dbReference type="HAMAP" id="MF_00098">
    <property type="entry name" value="Met_tRNA_synth_type1"/>
    <property type="match status" value="1"/>
</dbReference>
<dbReference type="InterPro" id="IPR001412">
    <property type="entry name" value="aa-tRNA-synth_I_CS"/>
</dbReference>
<dbReference type="InterPro" id="IPR041872">
    <property type="entry name" value="Anticodon_Met"/>
</dbReference>
<dbReference type="InterPro" id="IPR004495">
    <property type="entry name" value="Met-tRNA-synth_bsu_C"/>
</dbReference>
<dbReference type="InterPro" id="IPR023458">
    <property type="entry name" value="Met-tRNA_ligase_1"/>
</dbReference>
<dbReference type="InterPro" id="IPR014758">
    <property type="entry name" value="Met-tRNA_synth"/>
</dbReference>
<dbReference type="InterPro" id="IPR015413">
    <property type="entry name" value="Methionyl/Leucyl_tRNA_Synth"/>
</dbReference>
<dbReference type="InterPro" id="IPR033911">
    <property type="entry name" value="MetRS_core"/>
</dbReference>
<dbReference type="InterPro" id="IPR029038">
    <property type="entry name" value="MetRS_Zn"/>
</dbReference>
<dbReference type="InterPro" id="IPR012340">
    <property type="entry name" value="NA-bd_OB-fold"/>
</dbReference>
<dbReference type="InterPro" id="IPR014729">
    <property type="entry name" value="Rossmann-like_a/b/a_fold"/>
</dbReference>
<dbReference type="InterPro" id="IPR002547">
    <property type="entry name" value="tRNA-bd_dom"/>
</dbReference>
<dbReference type="InterPro" id="IPR009080">
    <property type="entry name" value="tRNAsynth_Ia_anticodon-bd"/>
</dbReference>
<dbReference type="NCBIfam" id="TIGR00398">
    <property type="entry name" value="metG"/>
    <property type="match status" value="1"/>
</dbReference>
<dbReference type="NCBIfam" id="TIGR00399">
    <property type="entry name" value="metG_C_term"/>
    <property type="match status" value="1"/>
</dbReference>
<dbReference type="NCBIfam" id="NF001100">
    <property type="entry name" value="PRK00133.1"/>
    <property type="match status" value="1"/>
</dbReference>
<dbReference type="PANTHER" id="PTHR45765">
    <property type="entry name" value="METHIONINE--TRNA LIGASE"/>
    <property type="match status" value="1"/>
</dbReference>
<dbReference type="PANTHER" id="PTHR45765:SF1">
    <property type="entry name" value="METHIONINE--TRNA LIGASE, CYTOPLASMIC"/>
    <property type="match status" value="1"/>
</dbReference>
<dbReference type="Pfam" id="PF19303">
    <property type="entry name" value="Anticodon_3"/>
    <property type="match status" value="1"/>
</dbReference>
<dbReference type="Pfam" id="PF09334">
    <property type="entry name" value="tRNA-synt_1g"/>
    <property type="match status" value="1"/>
</dbReference>
<dbReference type="Pfam" id="PF01588">
    <property type="entry name" value="tRNA_bind"/>
    <property type="match status" value="1"/>
</dbReference>
<dbReference type="PRINTS" id="PR01041">
    <property type="entry name" value="TRNASYNTHMET"/>
</dbReference>
<dbReference type="SUPFAM" id="SSF47323">
    <property type="entry name" value="Anticodon-binding domain of a subclass of class I aminoacyl-tRNA synthetases"/>
    <property type="match status" value="1"/>
</dbReference>
<dbReference type="SUPFAM" id="SSF57770">
    <property type="entry name" value="Methionyl-tRNA synthetase (MetRS), Zn-domain"/>
    <property type="match status" value="1"/>
</dbReference>
<dbReference type="SUPFAM" id="SSF50249">
    <property type="entry name" value="Nucleic acid-binding proteins"/>
    <property type="match status" value="1"/>
</dbReference>
<dbReference type="SUPFAM" id="SSF52374">
    <property type="entry name" value="Nucleotidylyl transferase"/>
    <property type="match status" value="1"/>
</dbReference>
<dbReference type="PROSITE" id="PS00178">
    <property type="entry name" value="AA_TRNA_LIGASE_I"/>
    <property type="match status" value="1"/>
</dbReference>
<dbReference type="PROSITE" id="PS50886">
    <property type="entry name" value="TRBD"/>
    <property type="match status" value="1"/>
</dbReference>
<accession>A4VJ05</accession>
<protein>
    <recommendedName>
        <fullName evidence="1">Methionine--tRNA ligase</fullName>
        <ecNumber evidence="1">6.1.1.10</ecNumber>
    </recommendedName>
    <alternativeName>
        <fullName evidence="1">Methionyl-tRNA synthetase</fullName>
        <shortName evidence="1">MetRS</shortName>
    </alternativeName>
</protein>
<feature type="chain" id="PRO_0000331875" description="Methionine--tRNA ligase">
    <location>
        <begin position="1"/>
        <end position="679"/>
    </location>
</feature>
<feature type="domain" description="tRNA-binding" evidence="1">
    <location>
        <begin position="577"/>
        <end position="679"/>
    </location>
</feature>
<feature type="short sequence motif" description="'HIGH' region">
    <location>
        <begin position="14"/>
        <end position="24"/>
    </location>
</feature>
<feature type="short sequence motif" description="'KMSKS' region">
    <location>
        <begin position="331"/>
        <end position="335"/>
    </location>
</feature>
<feature type="binding site" evidence="1">
    <location>
        <position position="145"/>
    </location>
    <ligand>
        <name>Zn(2+)</name>
        <dbReference type="ChEBI" id="CHEBI:29105"/>
    </ligand>
</feature>
<feature type="binding site" evidence="1">
    <location>
        <position position="148"/>
    </location>
    <ligand>
        <name>Zn(2+)</name>
        <dbReference type="ChEBI" id="CHEBI:29105"/>
    </ligand>
</feature>
<feature type="binding site" evidence="1">
    <location>
        <position position="158"/>
    </location>
    <ligand>
        <name>Zn(2+)</name>
        <dbReference type="ChEBI" id="CHEBI:29105"/>
    </ligand>
</feature>
<feature type="binding site" evidence="1">
    <location>
        <position position="161"/>
    </location>
    <ligand>
        <name>Zn(2+)</name>
        <dbReference type="ChEBI" id="CHEBI:29105"/>
    </ligand>
</feature>
<feature type="binding site" evidence="1">
    <location>
        <position position="334"/>
    </location>
    <ligand>
        <name>ATP</name>
        <dbReference type="ChEBI" id="CHEBI:30616"/>
    </ligand>
</feature>
<proteinExistence type="inferred from homology"/>
<evidence type="ECO:0000255" key="1">
    <source>
        <dbReference type="HAMAP-Rule" id="MF_00098"/>
    </source>
</evidence>
<evidence type="ECO:0000305" key="2"/>
<sequence length="679" mass="75269">MSEARQILVTSALPYANGSIHLGHMLEYIQTDMWVRFQKLRGNQCIYVCADDAHGSAIMLRAEKEGITPEQLIANVQAEHSADFADFLVNFDNFHSTHSPENRELAELIYTRLRDAGHIATRSVTQYFDPEKGMFLADRFIKGTCPRCAAEDQYGDNCEKCGATYEPTELKDPRSAISGATPVLKDSKHFFFKLPDFEAMLKEWTRGGALQESVANKIAEWLDGGLQEWDISRDAPYFGFEIPGEPGKYFYVWLDAPIGYMASFQNLCKRRPELSFDAFWSKESSAELYHFIGKDIINFHTLFWPAMLEGAGFRKPTAVNVHGYLTVNGQKMSKSRGTFIKARTYLDHLNPEYLRYYYASKLGRGVDDLDLNLDDFVQKVNSDLVGKVVNIASRCAGFIHKGNDGVMVEANPEPELWAAFQAAAPSIADAYEARDFARAMREIMALADRANAWIADKAPWALNKVEGKQAEVQEICALGVNLFRQLVIFLKPVLPNLAAAAEQFLNVAPLSWDDHATLLANHKLNAFTPLMTRIEPAKIDAMIEASKEDLAASEAAVPAGNGELAKAPLAAEINFDTFAAVDLRIALIEKAEFVEGADKLLRLTLNIGDATRNVFSGIKSAYPDPSKLEGRLTLYVANLAPRKMKFGMSEGMVLAAGPGGSEIYLLSPDNGAKPGQRVM</sequence>
<reference key="1">
    <citation type="journal article" date="2008" name="Proc. Natl. Acad. Sci. U.S.A.">
        <title>Nitrogen fixation island and rhizosphere competence traits in the genome of root-associated Pseudomonas stutzeri A1501.</title>
        <authorList>
            <person name="Yan Y."/>
            <person name="Yang J."/>
            <person name="Dou Y."/>
            <person name="Chen M."/>
            <person name="Ping S."/>
            <person name="Peng J."/>
            <person name="Lu W."/>
            <person name="Zhang W."/>
            <person name="Yao Z."/>
            <person name="Li H."/>
            <person name="Liu W."/>
            <person name="He S."/>
            <person name="Geng L."/>
            <person name="Zhang X."/>
            <person name="Yang F."/>
            <person name="Yu H."/>
            <person name="Zhan Y."/>
            <person name="Li D."/>
            <person name="Lin Z."/>
            <person name="Wang Y."/>
            <person name="Elmerich C."/>
            <person name="Lin M."/>
            <person name="Jin Q."/>
        </authorList>
    </citation>
    <scope>NUCLEOTIDE SEQUENCE [LARGE SCALE GENOMIC DNA]</scope>
    <source>
        <strain>A1501</strain>
    </source>
</reference>
<name>SYM_STUS1</name>